<gene>
    <name evidence="1" type="primary">ppsR</name>
    <name type="ordered locus">UTI89_C1896</name>
</gene>
<sequence>MDNAVDRHVFYISDGTAITAEVLGHAVMSQFPVTISSITLPFVENESRARAVKDQIDAIYHQTGVRPLVFYSIVLPEIRAIILQSEGFCQDIVQALVAPLQQEMKLDPTPIAHRTHGLNPNNLNKYDARIAAIDYTLAHDDGISLRNLDQAQVILLGVSRCGKTPTSLYLAMQFGIRAANYPFIADDMDNLVLPASLKPLQHKLFGLTIDPERLAAIREERRENSRYASLRQCRMEVAEVEALYRKNQIPWINSTNYSVEEIATKILDIMGLSRRMY</sequence>
<proteinExistence type="inferred from homology"/>
<reference key="1">
    <citation type="journal article" date="2006" name="Proc. Natl. Acad. Sci. U.S.A.">
        <title>Identification of genes subject to positive selection in uropathogenic strains of Escherichia coli: a comparative genomics approach.</title>
        <authorList>
            <person name="Chen S.L."/>
            <person name="Hung C.-S."/>
            <person name="Xu J."/>
            <person name="Reigstad C.S."/>
            <person name="Magrini V."/>
            <person name="Sabo A."/>
            <person name="Blasiar D."/>
            <person name="Bieri T."/>
            <person name="Meyer R.R."/>
            <person name="Ozersky P."/>
            <person name="Armstrong J.R."/>
            <person name="Fulton R.S."/>
            <person name="Latreille J.P."/>
            <person name="Spieth J."/>
            <person name="Hooton T.M."/>
            <person name="Mardis E.R."/>
            <person name="Hultgren S.J."/>
            <person name="Gordon J.I."/>
        </authorList>
    </citation>
    <scope>NUCLEOTIDE SEQUENCE [LARGE SCALE GENOMIC DNA]</scope>
    <source>
        <strain>UTI89 / UPEC</strain>
    </source>
</reference>
<evidence type="ECO:0000255" key="1">
    <source>
        <dbReference type="HAMAP-Rule" id="MF_01062"/>
    </source>
</evidence>
<keyword id="KW-0418">Kinase</keyword>
<keyword id="KW-0547">Nucleotide-binding</keyword>
<keyword id="KW-0723">Serine/threonine-protein kinase</keyword>
<keyword id="KW-0808">Transferase</keyword>
<dbReference type="EC" id="2.7.11.33" evidence="1"/>
<dbReference type="EC" id="2.7.4.28" evidence="1"/>
<dbReference type="EMBL" id="CP000243">
    <property type="protein sequence ID" value="ABE07372.1"/>
    <property type="molecule type" value="Genomic_DNA"/>
</dbReference>
<dbReference type="RefSeq" id="WP_000368046.1">
    <property type="nucleotide sequence ID" value="NZ_CP064825.1"/>
</dbReference>
<dbReference type="SMR" id="Q1RB92"/>
<dbReference type="GeneID" id="93775866"/>
<dbReference type="KEGG" id="eci:UTI89_C1896"/>
<dbReference type="HOGENOM" id="CLU_046206_1_0_6"/>
<dbReference type="Proteomes" id="UP000001952">
    <property type="component" value="Chromosome"/>
</dbReference>
<dbReference type="GO" id="GO:0043531">
    <property type="term" value="F:ADP binding"/>
    <property type="evidence" value="ECO:0007669"/>
    <property type="project" value="UniProtKB-UniRule"/>
</dbReference>
<dbReference type="GO" id="GO:0005524">
    <property type="term" value="F:ATP binding"/>
    <property type="evidence" value="ECO:0007669"/>
    <property type="project" value="InterPro"/>
</dbReference>
<dbReference type="GO" id="GO:0016776">
    <property type="term" value="F:phosphotransferase activity, phosphate group as acceptor"/>
    <property type="evidence" value="ECO:0007669"/>
    <property type="project" value="UniProtKB-UniRule"/>
</dbReference>
<dbReference type="GO" id="GO:0004674">
    <property type="term" value="F:protein serine/threonine kinase activity"/>
    <property type="evidence" value="ECO:0007669"/>
    <property type="project" value="UniProtKB-UniRule"/>
</dbReference>
<dbReference type="HAMAP" id="MF_01062">
    <property type="entry name" value="PSRP"/>
    <property type="match status" value="1"/>
</dbReference>
<dbReference type="InterPro" id="IPR005177">
    <property type="entry name" value="Kinase-pyrophosphorylase"/>
</dbReference>
<dbReference type="InterPro" id="IPR026530">
    <property type="entry name" value="PSRP"/>
</dbReference>
<dbReference type="NCBIfam" id="NF003742">
    <property type="entry name" value="PRK05339.1"/>
    <property type="match status" value="1"/>
</dbReference>
<dbReference type="PANTHER" id="PTHR31756">
    <property type="entry name" value="PYRUVATE, PHOSPHATE DIKINASE REGULATORY PROTEIN 1, CHLOROPLASTIC"/>
    <property type="match status" value="1"/>
</dbReference>
<dbReference type="PANTHER" id="PTHR31756:SF3">
    <property type="entry name" value="PYRUVATE, PHOSPHATE DIKINASE REGULATORY PROTEIN 1, CHLOROPLASTIC"/>
    <property type="match status" value="1"/>
</dbReference>
<dbReference type="Pfam" id="PF03618">
    <property type="entry name" value="Kinase-PPPase"/>
    <property type="match status" value="1"/>
</dbReference>
<feature type="chain" id="PRO_0000316671" description="Phosphoenolpyruvate synthase regulatory protein">
    <location>
        <begin position="1"/>
        <end position="277"/>
    </location>
</feature>
<feature type="binding site" evidence="1">
    <location>
        <begin position="157"/>
        <end position="164"/>
    </location>
    <ligand>
        <name>ADP</name>
        <dbReference type="ChEBI" id="CHEBI:456216"/>
    </ligand>
</feature>
<name>PSRP_ECOUT</name>
<comment type="function">
    <text evidence="1">Bifunctional serine/threonine kinase and phosphorylase involved in the regulation of the phosphoenolpyruvate synthase (PEPS) by catalyzing its phosphorylation/dephosphorylation.</text>
</comment>
<comment type="catalytic activity">
    <reaction evidence="1">
        <text>[pyruvate, water dikinase] + ADP = [pyruvate, water dikinase]-phosphate + AMP + H(+)</text>
        <dbReference type="Rhea" id="RHEA:46020"/>
        <dbReference type="Rhea" id="RHEA-COMP:11425"/>
        <dbReference type="Rhea" id="RHEA-COMP:11426"/>
        <dbReference type="ChEBI" id="CHEBI:15378"/>
        <dbReference type="ChEBI" id="CHEBI:43176"/>
        <dbReference type="ChEBI" id="CHEBI:68546"/>
        <dbReference type="ChEBI" id="CHEBI:456215"/>
        <dbReference type="ChEBI" id="CHEBI:456216"/>
        <dbReference type="EC" id="2.7.11.33"/>
    </reaction>
</comment>
<comment type="catalytic activity">
    <reaction evidence="1">
        <text>[pyruvate, water dikinase]-phosphate + phosphate + H(+) = [pyruvate, water dikinase] + diphosphate</text>
        <dbReference type="Rhea" id="RHEA:48580"/>
        <dbReference type="Rhea" id="RHEA-COMP:11425"/>
        <dbReference type="Rhea" id="RHEA-COMP:11426"/>
        <dbReference type="ChEBI" id="CHEBI:15378"/>
        <dbReference type="ChEBI" id="CHEBI:33019"/>
        <dbReference type="ChEBI" id="CHEBI:43176"/>
        <dbReference type="ChEBI" id="CHEBI:43474"/>
        <dbReference type="ChEBI" id="CHEBI:68546"/>
        <dbReference type="EC" id="2.7.4.28"/>
    </reaction>
</comment>
<comment type="similarity">
    <text evidence="1">Belongs to the pyruvate, phosphate/water dikinase regulatory protein family. PSRP subfamily.</text>
</comment>
<protein>
    <recommendedName>
        <fullName evidence="1">Phosphoenolpyruvate synthase regulatory protein</fullName>
        <shortName evidence="1">PEP synthase regulatory protein</shortName>
        <shortName evidence="1">PSRP</shortName>
        <ecNumber evidence="1">2.7.11.33</ecNumber>
        <ecNumber evidence="1">2.7.4.28</ecNumber>
    </recommendedName>
    <alternativeName>
        <fullName evidence="1">Pyruvate, water dikinase regulatory protein</fullName>
    </alternativeName>
</protein>
<accession>Q1RB92</accession>
<organism>
    <name type="scientific">Escherichia coli (strain UTI89 / UPEC)</name>
    <dbReference type="NCBI Taxonomy" id="364106"/>
    <lineage>
        <taxon>Bacteria</taxon>
        <taxon>Pseudomonadati</taxon>
        <taxon>Pseudomonadota</taxon>
        <taxon>Gammaproteobacteria</taxon>
        <taxon>Enterobacterales</taxon>
        <taxon>Enterobacteriaceae</taxon>
        <taxon>Escherichia</taxon>
    </lineage>
</organism>